<geneLocation type="chloroplast"/>
<reference key="1">
    <citation type="journal article" date="2006" name="Mol. Genet. Genomics">
        <title>Distinctive architecture of the chloroplast genome in the chlorophycean green alga Stigeoclonium helveticum.</title>
        <authorList>
            <person name="Belanger A.-S."/>
            <person name="Brouard J.-S."/>
            <person name="Charlebois P."/>
            <person name="Otis C."/>
            <person name="Lemieux C."/>
            <person name="Turmel M."/>
        </authorList>
    </citation>
    <scope>NUCLEOTIDE SEQUENCE [LARGE SCALE GENOMIC DNA]</scope>
    <source>
        <strain>UTEX 441</strain>
    </source>
</reference>
<keyword id="KW-0150">Chloroplast</keyword>
<keyword id="KW-0249">Electron transport</keyword>
<keyword id="KW-0472">Membrane</keyword>
<keyword id="KW-0602">Photosynthesis</keyword>
<keyword id="KW-0934">Plastid</keyword>
<keyword id="KW-0793">Thylakoid</keyword>
<keyword id="KW-0812">Transmembrane</keyword>
<keyword id="KW-1133">Transmembrane helix</keyword>
<keyword id="KW-0813">Transport</keyword>
<comment type="function">
    <text evidence="1">Component of the cytochrome b6-f complex, which mediates electron transfer between photosystem II (PSII) and photosystem I (PSI), cyclic electron flow around PSI, and state transitions. PetG is required for either the stability or assembly of the cytochrome b6-f complex.</text>
</comment>
<comment type="subunit">
    <text evidence="1">The 4 large subunits of the cytochrome b6-f complex are cytochrome b6, subunit IV (17 kDa polypeptide, PetD), cytochrome f and the Rieske protein, while the 4 small subunits are PetG, PetL, PetM and PetN. The complex functions as a dimer.</text>
</comment>
<comment type="subcellular location">
    <subcellularLocation>
        <location evidence="1">Plastid</location>
        <location evidence="1">Chloroplast thylakoid membrane</location>
        <topology evidence="1">Single-pass membrane protein</topology>
    </subcellularLocation>
</comment>
<comment type="similarity">
    <text evidence="1">Belongs to the PetG family.</text>
</comment>
<feature type="chain" id="PRO_0000275512" description="Cytochrome b6-f complex subunit 5">
    <location>
        <begin position="1"/>
        <end position="37"/>
    </location>
</feature>
<feature type="transmembrane region" description="Helical" evidence="1">
    <location>
        <begin position="5"/>
        <end position="25"/>
    </location>
</feature>
<protein>
    <recommendedName>
        <fullName evidence="1">Cytochrome b6-f complex subunit 5</fullName>
    </recommendedName>
    <alternativeName>
        <fullName evidence="1">Cytochrome b6-f complex subunit PetG</fullName>
    </alternativeName>
    <alternativeName>
        <fullName evidence="1">Cytochrome b6-f complex subunit V</fullName>
    </alternativeName>
</protein>
<name>PETG_STIHE</name>
<dbReference type="EMBL" id="DQ630521">
    <property type="protein sequence ID" value="ABF60160.1"/>
    <property type="molecule type" value="Genomic_DNA"/>
</dbReference>
<dbReference type="RefSeq" id="YP_764386.1">
    <property type="nucleotide sequence ID" value="NC_008372.1"/>
</dbReference>
<dbReference type="SMR" id="Q06SI0"/>
<dbReference type="GeneID" id="4308403"/>
<dbReference type="GO" id="GO:0009535">
    <property type="term" value="C:chloroplast thylakoid membrane"/>
    <property type="evidence" value="ECO:0007669"/>
    <property type="project" value="UniProtKB-SubCell"/>
</dbReference>
<dbReference type="GO" id="GO:0009512">
    <property type="term" value="C:cytochrome b6f complex"/>
    <property type="evidence" value="ECO:0007669"/>
    <property type="project" value="InterPro"/>
</dbReference>
<dbReference type="GO" id="GO:0045158">
    <property type="term" value="F:electron transporter, transferring electrons within cytochrome b6/f complex of photosystem II activity"/>
    <property type="evidence" value="ECO:0007669"/>
    <property type="project" value="UniProtKB-UniRule"/>
</dbReference>
<dbReference type="GO" id="GO:0017004">
    <property type="term" value="P:cytochrome complex assembly"/>
    <property type="evidence" value="ECO:0007669"/>
    <property type="project" value="UniProtKB-UniRule"/>
</dbReference>
<dbReference type="GO" id="GO:0015979">
    <property type="term" value="P:photosynthesis"/>
    <property type="evidence" value="ECO:0007669"/>
    <property type="project" value="UniProtKB-KW"/>
</dbReference>
<dbReference type="HAMAP" id="MF_00432">
    <property type="entry name" value="Cytb6_f_PetG"/>
    <property type="match status" value="1"/>
</dbReference>
<dbReference type="InterPro" id="IPR003683">
    <property type="entry name" value="Cyt_6/f_cplx_su5"/>
</dbReference>
<dbReference type="InterPro" id="IPR036099">
    <property type="entry name" value="Cyt_6/f_cplx_su5_sf"/>
</dbReference>
<dbReference type="NCBIfam" id="NF001907">
    <property type="entry name" value="PRK00665.1"/>
    <property type="match status" value="1"/>
</dbReference>
<dbReference type="Pfam" id="PF02529">
    <property type="entry name" value="PetG"/>
    <property type="match status" value="1"/>
</dbReference>
<dbReference type="PIRSF" id="PIRSF000034">
    <property type="entry name" value="Cyt_b6-f_V"/>
    <property type="match status" value="1"/>
</dbReference>
<dbReference type="SUPFAM" id="SSF103446">
    <property type="entry name" value="PetG subunit of the cytochrome b6f complex"/>
    <property type="match status" value="1"/>
</dbReference>
<evidence type="ECO:0000255" key="1">
    <source>
        <dbReference type="HAMAP-Rule" id="MF_00432"/>
    </source>
</evidence>
<organism>
    <name type="scientific">Stigeoclonium helveticum</name>
    <name type="common">Green alga</name>
    <dbReference type="NCBI Taxonomy" id="55999"/>
    <lineage>
        <taxon>Eukaryota</taxon>
        <taxon>Viridiplantae</taxon>
        <taxon>Chlorophyta</taxon>
        <taxon>core chlorophytes</taxon>
        <taxon>Chlorophyceae</taxon>
        <taxon>OCC clade</taxon>
        <taxon>Chaetophorales</taxon>
        <taxon>Chaetophoraceae</taxon>
        <taxon>Stigeoclonium</taxon>
    </lineage>
</organism>
<sequence>MVEPLLSGIVLGLVPVTIAGLFVTAYLQYRRGDQATW</sequence>
<accession>Q06SI0</accession>
<gene>
    <name evidence="1" type="primary">petG</name>
</gene>
<proteinExistence type="inferred from homology"/>